<keyword id="KW-0067">ATP-binding</keyword>
<keyword id="KW-0315">Glutamine amidotransferase</keyword>
<keyword id="KW-0436">Ligase</keyword>
<keyword id="KW-0460">Magnesium</keyword>
<keyword id="KW-0479">Metal-binding</keyword>
<keyword id="KW-0547">Nucleotide-binding</keyword>
<keyword id="KW-0665">Pyrimidine biosynthesis</keyword>
<dbReference type="EC" id="6.3.4.2" evidence="1"/>
<dbReference type="EMBL" id="CP000686">
    <property type="protein sequence ID" value="ABQ91478.1"/>
    <property type="molecule type" value="Genomic_DNA"/>
</dbReference>
<dbReference type="RefSeq" id="WP_011957822.1">
    <property type="nucleotide sequence ID" value="NC_009523.1"/>
</dbReference>
<dbReference type="SMR" id="A5UXX5"/>
<dbReference type="STRING" id="357808.RoseRS_3115"/>
<dbReference type="KEGG" id="rrs:RoseRS_3115"/>
<dbReference type="eggNOG" id="COG0504">
    <property type="taxonomic scope" value="Bacteria"/>
</dbReference>
<dbReference type="HOGENOM" id="CLU_011675_5_0_0"/>
<dbReference type="OrthoDB" id="9801107at2"/>
<dbReference type="UniPathway" id="UPA00159">
    <property type="reaction ID" value="UER00277"/>
</dbReference>
<dbReference type="Proteomes" id="UP000006554">
    <property type="component" value="Chromosome"/>
</dbReference>
<dbReference type="GO" id="GO:0005829">
    <property type="term" value="C:cytosol"/>
    <property type="evidence" value="ECO:0007669"/>
    <property type="project" value="TreeGrafter"/>
</dbReference>
<dbReference type="GO" id="GO:0005524">
    <property type="term" value="F:ATP binding"/>
    <property type="evidence" value="ECO:0007669"/>
    <property type="project" value="UniProtKB-KW"/>
</dbReference>
<dbReference type="GO" id="GO:0003883">
    <property type="term" value="F:CTP synthase activity"/>
    <property type="evidence" value="ECO:0007669"/>
    <property type="project" value="UniProtKB-UniRule"/>
</dbReference>
<dbReference type="GO" id="GO:0004359">
    <property type="term" value="F:glutaminase activity"/>
    <property type="evidence" value="ECO:0007669"/>
    <property type="project" value="RHEA"/>
</dbReference>
<dbReference type="GO" id="GO:0042802">
    <property type="term" value="F:identical protein binding"/>
    <property type="evidence" value="ECO:0007669"/>
    <property type="project" value="TreeGrafter"/>
</dbReference>
<dbReference type="GO" id="GO:0046872">
    <property type="term" value="F:metal ion binding"/>
    <property type="evidence" value="ECO:0007669"/>
    <property type="project" value="UniProtKB-KW"/>
</dbReference>
<dbReference type="GO" id="GO:0044210">
    <property type="term" value="P:'de novo' CTP biosynthetic process"/>
    <property type="evidence" value="ECO:0007669"/>
    <property type="project" value="UniProtKB-UniRule"/>
</dbReference>
<dbReference type="GO" id="GO:0019856">
    <property type="term" value="P:pyrimidine nucleobase biosynthetic process"/>
    <property type="evidence" value="ECO:0007669"/>
    <property type="project" value="TreeGrafter"/>
</dbReference>
<dbReference type="CDD" id="cd03113">
    <property type="entry name" value="CTPS_N"/>
    <property type="match status" value="1"/>
</dbReference>
<dbReference type="CDD" id="cd01746">
    <property type="entry name" value="GATase1_CTP_Synthase"/>
    <property type="match status" value="1"/>
</dbReference>
<dbReference type="FunFam" id="3.40.50.300:FF:000009">
    <property type="entry name" value="CTP synthase"/>
    <property type="match status" value="1"/>
</dbReference>
<dbReference type="FunFam" id="3.40.50.880:FF:000002">
    <property type="entry name" value="CTP synthase"/>
    <property type="match status" value="1"/>
</dbReference>
<dbReference type="Gene3D" id="3.40.50.880">
    <property type="match status" value="1"/>
</dbReference>
<dbReference type="Gene3D" id="3.40.50.300">
    <property type="entry name" value="P-loop containing nucleotide triphosphate hydrolases"/>
    <property type="match status" value="1"/>
</dbReference>
<dbReference type="HAMAP" id="MF_01227">
    <property type="entry name" value="PyrG"/>
    <property type="match status" value="1"/>
</dbReference>
<dbReference type="InterPro" id="IPR029062">
    <property type="entry name" value="Class_I_gatase-like"/>
</dbReference>
<dbReference type="InterPro" id="IPR004468">
    <property type="entry name" value="CTP_synthase"/>
</dbReference>
<dbReference type="InterPro" id="IPR017456">
    <property type="entry name" value="CTP_synthase_N"/>
</dbReference>
<dbReference type="InterPro" id="IPR017926">
    <property type="entry name" value="GATASE"/>
</dbReference>
<dbReference type="InterPro" id="IPR033828">
    <property type="entry name" value="GATase1_CTP_Synthase"/>
</dbReference>
<dbReference type="InterPro" id="IPR027417">
    <property type="entry name" value="P-loop_NTPase"/>
</dbReference>
<dbReference type="NCBIfam" id="NF003792">
    <property type="entry name" value="PRK05380.1"/>
    <property type="match status" value="1"/>
</dbReference>
<dbReference type="NCBIfam" id="TIGR00337">
    <property type="entry name" value="PyrG"/>
    <property type="match status" value="1"/>
</dbReference>
<dbReference type="PANTHER" id="PTHR11550">
    <property type="entry name" value="CTP SYNTHASE"/>
    <property type="match status" value="1"/>
</dbReference>
<dbReference type="PANTHER" id="PTHR11550:SF0">
    <property type="entry name" value="CTP SYNTHASE-RELATED"/>
    <property type="match status" value="1"/>
</dbReference>
<dbReference type="Pfam" id="PF06418">
    <property type="entry name" value="CTP_synth_N"/>
    <property type="match status" value="1"/>
</dbReference>
<dbReference type="Pfam" id="PF00117">
    <property type="entry name" value="GATase"/>
    <property type="match status" value="1"/>
</dbReference>
<dbReference type="SUPFAM" id="SSF52317">
    <property type="entry name" value="Class I glutamine amidotransferase-like"/>
    <property type="match status" value="1"/>
</dbReference>
<dbReference type="SUPFAM" id="SSF52540">
    <property type="entry name" value="P-loop containing nucleoside triphosphate hydrolases"/>
    <property type="match status" value="1"/>
</dbReference>
<dbReference type="PROSITE" id="PS51273">
    <property type="entry name" value="GATASE_TYPE_1"/>
    <property type="match status" value="1"/>
</dbReference>
<accession>A5UXX5</accession>
<gene>
    <name evidence="1" type="primary">pyrG</name>
    <name type="ordered locus">RoseRS_3115</name>
</gene>
<sequence length="557" mass="61609">MAKYIFVTGGVASSVGKGITVASIGRLLKARGVRVSVQKLDPYINVDPGTMSPYQHGEVFVTEDGAETDLDLGHYERFIDVNLTRLSNVTTGQIYSAVIQKERRGDYLGGTIQVIPHITNEIKSRIAAVARQTGADVVIVEIGGTVGDIEGLPFLEAIRQMRKDVGRDNVLYIHVTLLPHIGATGEVKTKPTQHSVMELRRVGITADVIVCRSDYPITDEIRDKIALFADVDVEAVVPLHTVDSIYEVPLVLEEAGLGAYLTQRLGLSASRPDLDDWRDLVARIKAPKRKLAIALVGKYVELHDAYISVVEALRHAGLHQGVDVDIRWISSEQIEEEGCEPLLHDVYGIVVPGGFGDRGIEGKIAAAEYARVNNVPYLGLCLGMQVATISFARHIMGPESRANSTEFDLHTPHPVIDFMPDQLDITDKGGTMRLGGYPCKLTPGTRAYAAYGVDVVVERHRHRFEFNNKYRRLFESAGMIVSGQSPDGRLVEIIELRNHPWYVGTQFHPEFQSRPDRPHPLFRDFVAAAAKTFREGDQRPLPLEQNGAVTEHEPHSR</sequence>
<name>PYRG_ROSS1</name>
<reference key="1">
    <citation type="submission" date="2007-04" db="EMBL/GenBank/DDBJ databases">
        <title>Complete sequence of Roseiflexus sp. RS-1.</title>
        <authorList>
            <consortium name="US DOE Joint Genome Institute"/>
            <person name="Copeland A."/>
            <person name="Lucas S."/>
            <person name="Lapidus A."/>
            <person name="Barry K."/>
            <person name="Detter J.C."/>
            <person name="Glavina del Rio T."/>
            <person name="Hammon N."/>
            <person name="Israni S."/>
            <person name="Dalin E."/>
            <person name="Tice H."/>
            <person name="Pitluck S."/>
            <person name="Chertkov O."/>
            <person name="Brettin T."/>
            <person name="Bruce D."/>
            <person name="Han C."/>
            <person name="Schmutz J."/>
            <person name="Larimer F."/>
            <person name="Land M."/>
            <person name="Hauser L."/>
            <person name="Kyrpides N."/>
            <person name="Mikhailova N."/>
            <person name="Bryant D.A."/>
            <person name="Richardson P."/>
        </authorList>
    </citation>
    <scope>NUCLEOTIDE SEQUENCE [LARGE SCALE GENOMIC DNA]</scope>
    <source>
        <strain>RS-1</strain>
    </source>
</reference>
<feature type="chain" id="PRO_1000139554" description="CTP synthase">
    <location>
        <begin position="1"/>
        <end position="557"/>
    </location>
</feature>
<feature type="domain" description="Glutamine amidotransferase type-1" evidence="1">
    <location>
        <begin position="292"/>
        <end position="535"/>
    </location>
</feature>
<feature type="region of interest" description="Amidoligase domain" evidence="1">
    <location>
        <begin position="1"/>
        <end position="267"/>
    </location>
</feature>
<feature type="region of interest" description="Disordered" evidence="2">
    <location>
        <begin position="536"/>
        <end position="557"/>
    </location>
</feature>
<feature type="active site" description="Nucleophile; for glutamine hydrolysis" evidence="1">
    <location>
        <position position="381"/>
    </location>
</feature>
<feature type="active site" evidence="1">
    <location>
        <position position="508"/>
    </location>
</feature>
<feature type="active site" evidence="1">
    <location>
        <position position="510"/>
    </location>
</feature>
<feature type="binding site" evidence="1">
    <location>
        <position position="13"/>
    </location>
    <ligand>
        <name>CTP</name>
        <dbReference type="ChEBI" id="CHEBI:37563"/>
        <note>allosteric inhibitor</note>
    </ligand>
</feature>
<feature type="binding site" evidence="1">
    <location>
        <position position="13"/>
    </location>
    <ligand>
        <name>UTP</name>
        <dbReference type="ChEBI" id="CHEBI:46398"/>
    </ligand>
</feature>
<feature type="binding site" evidence="1">
    <location>
        <begin position="14"/>
        <end position="19"/>
    </location>
    <ligand>
        <name>ATP</name>
        <dbReference type="ChEBI" id="CHEBI:30616"/>
    </ligand>
</feature>
<feature type="binding site" evidence="1">
    <location>
        <position position="54"/>
    </location>
    <ligand>
        <name>L-glutamine</name>
        <dbReference type="ChEBI" id="CHEBI:58359"/>
    </ligand>
</feature>
<feature type="binding site" evidence="1">
    <location>
        <position position="71"/>
    </location>
    <ligand>
        <name>ATP</name>
        <dbReference type="ChEBI" id="CHEBI:30616"/>
    </ligand>
</feature>
<feature type="binding site" evidence="1">
    <location>
        <position position="71"/>
    </location>
    <ligand>
        <name>Mg(2+)</name>
        <dbReference type="ChEBI" id="CHEBI:18420"/>
    </ligand>
</feature>
<feature type="binding site" evidence="1">
    <location>
        <position position="141"/>
    </location>
    <ligand>
        <name>Mg(2+)</name>
        <dbReference type="ChEBI" id="CHEBI:18420"/>
    </ligand>
</feature>
<feature type="binding site" evidence="1">
    <location>
        <begin position="148"/>
        <end position="150"/>
    </location>
    <ligand>
        <name>CTP</name>
        <dbReference type="ChEBI" id="CHEBI:37563"/>
        <note>allosteric inhibitor</note>
    </ligand>
</feature>
<feature type="binding site" evidence="1">
    <location>
        <begin position="188"/>
        <end position="193"/>
    </location>
    <ligand>
        <name>CTP</name>
        <dbReference type="ChEBI" id="CHEBI:37563"/>
        <note>allosteric inhibitor</note>
    </ligand>
</feature>
<feature type="binding site" evidence="1">
    <location>
        <begin position="188"/>
        <end position="193"/>
    </location>
    <ligand>
        <name>UTP</name>
        <dbReference type="ChEBI" id="CHEBI:46398"/>
    </ligand>
</feature>
<feature type="binding site" evidence="1">
    <location>
        <position position="224"/>
    </location>
    <ligand>
        <name>CTP</name>
        <dbReference type="ChEBI" id="CHEBI:37563"/>
        <note>allosteric inhibitor</note>
    </ligand>
</feature>
<feature type="binding site" evidence="1">
    <location>
        <position position="224"/>
    </location>
    <ligand>
        <name>UTP</name>
        <dbReference type="ChEBI" id="CHEBI:46398"/>
    </ligand>
</feature>
<feature type="binding site" evidence="1">
    <location>
        <position position="354"/>
    </location>
    <ligand>
        <name>L-glutamine</name>
        <dbReference type="ChEBI" id="CHEBI:58359"/>
    </ligand>
</feature>
<feature type="binding site" evidence="1">
    <location>
        <begin position="382"/>
        <end position="385"/>
    </location>
    <ligand>
        <name>L-glutamine</name>
        <dbReference type="ChEBI" id="CHEBI:58359"/>
    </ligand>
</feature>
<feature type="binding site" evidence="1">
    <location>
        <position position="406"/>
    </location>
    <ligand>
        <name>L-glutamine</name>
        <dbReference type="ChEBI" id="CHEBI:58359"/>
    </ligand>
</feature>
<feature type="binding site" evidence="1">
    <location>
        <position position="463"/>
    </location>
    <ligand>
        <name>L-glutamine</name>
        <dbReference type="ChEBI" id="CHEBI:58359"/>
    </ligand>
</feature>
<proteinExistence type="inferred from homology"/>
<comment type="function">
    <text evidence="1">Catalyzes the ATP-dependent amination of UTP to CTP with either L-glutamine or ammonia as the source of nitrogen. Regulates intracellular CTP levels through interactions with the four ribonucleotide triphosphates.</text>
</comment>
<comment type="catalytic activity">
    <reaction evidence="1">
        <text>UTP + L-glutamine + ATP + H2O = CTP + L-glutamate + ADP + phosphate + 2 H(+)</text>
        <dbReference type="Rhea" id="RHEA:26426"/>
        <dbReference type="ChEBI" id="CHEBI:15377"/>
        <dbReference type="ChEBI" id="CHEBI:15378"/>
        <dbReference type="ChEBI" id="CHEBI:29985"/>
        <dbReference type="ChEBI" id="CHEBI:30616"/>
        <dbReference type="ChEBI" id="CHEBI:37563"/>
        <dbReference type="ChEBI" id="CHEBI:43474"/>
        <dbReference type="ChEBI" id="CHEBI:46398"/>
        <dbReference type="ChEBI" id="CHEBI:58359"/>
        <dbReference type="ChEBI" id="CHEBI:456216"/>
        <dbReference type="EC" id="6.3.4.2"/>
    </reaction>
</comment>
<comment type="catalytic activity">
    <reaction evidence="1">
        <text>L-glutamine + H2O = L-glutamate + NH4(+)</text>
        <dbReference type="Rhea" id="RHEA:15889"/>
        <dbReference type="ChEBI" id="CHEBI:15377"/>
        <dbReference type="ChEBI" id="CHEBI:28938"/>
        <dbReference type="ChEBI" id="CHEBI:29985"/>
        <dbReference type="ChEBI" id="CHEBI:58359"/>
    </reaction>
</comment>
<comment type="catalytic activity">
    <reaction evidence="1">
        <text>UTP + NH4(+) + ATP = CTP + ADP + phosphate + 2 H(+)</text>
        <dbReference type="Rhea" id="RHEA:16597"/>
        <dbReference type="ChEBI" id="CHEBI:15378"/>
        <dbReference type="ChEBI" id="CHEBI:28938"/>
        <dbReference type="ChEBI" id="CHEBI:30616"/>
        <dbReference type="ChEBI" id="CHEBI:37563"/>
        <dbReference type="ChEBI" id="CHEBI:43474"/>
        <dbReference type="ChEBI" id="CHEBI:46398"/>
        <dbReference type="ChEBI" id="CHEBI:456216"/>
    </reaction>
</comment>
<comment type="activity regulation">
    <text evidence="1">Allosterically activated by GTP, when glutamine is the substrate; GTP has no effect on the reaction when ammonia is the substrate. The allosteric effector GTP functions by stabilizing the protein conformation that binds the tetrahedral intermediate(s) formed during glutamine hydrolysis. Inhibited by the product CTP, via allosteric rather than competitive inhibition.</text>
</comment>
<comment type="pathway">
    <text evidence="1">Pyrimidine metabolism; CTP biosynthesis via de novo pathway; CTP from UDP: step 2/2.</text>
</comment>
<comment type="subunit">
    <text evidence="1">Homotetramer.</text>
</comment>
<comment type="miscellaneous">
    <text evidence="1">CTPSs have evolved a hybrid strategy for distinguishing between UTP and CTP. The overlapping regions of the product feedback inhibitory and substrate sites recognize a common feature in both compounds, the triphosphate moiety. To differentiate isosteric substrate and product pyrimidine rings, an additional pocket far from the expected kinase/ligase catalytic site, specifically recognizes the cytosine and ribose portions of the product inhibitor.</text>
</comment>
<comment type="similarity">
    <text evidence="1">Belongs to the CTP synthase family.</text>
</comment>
<protein>
    <recommendedName>
        <fullName evidence="1">CTP synthase</fullName>
        <ecNumber evidence="1">6.3.4.2</ecNumber>
    </recommendedName>
    <alternativeName>
        <fullName evidence="1">Cytidine 5'-triphosphate synthase</fullName>
    </alternativeName>
    <alternativeName>
        <fullName evidence="1">Cytidine triphosphate synthetase</fullName>
        <shortName evidence="1">CTP synthetase</shortName>
        <shortName evidence="1">CTPS</shortName>
    </alternativeName>
    <alternativeName>
        <fullName evidence="1">UTP--ammonia ligase</fullName>
    </alternativeName>
</protein>
<organism>
    <name type="scientific">Roseiflexus sp. (strain RS-1)</name>
    <dbReference type="NCBI Taxonomy" id="357808"/>
    <lineage>
        <taxon>Bacteria</taxon>
        <taxon>Bacillati</taxon>
        <taxon>Chloroflexota</taxon>
        <taxon>Chloroflexia</taxon>
        <taxon>Chloroflexales</taxon>
        <taxon>Roseiflexineae</taxon>
        <taxon>Roseiflexaceae</taxon>
        <taxon>Roseiflexus</taxon>
    </lineage>
</organism>
<evidence type="ECO:0000255" key="1">
    <source>
        <dbReference type="HAMAP-Rule" id="MF_01227"/>
    </source>
</evidence>
<evidence type="ECO:0000256" key="2">
    <source>
        <dbReference type="SAM" id="MobiDB-lite"/>
    </source>
</evidence>